<protein>
    <recommendedName>
        <fullName>tRNA pseudouridine synthase C</fullName>
        <ecNumber>5.4.99.26</ecNumber>
    </recommendedName>
    <alternativeName>
        <fullName>tRNA pseudouridine(65) synthase</fullName>
    </alternativeName>
    <alternativeName>
        <fullName>tRNA pseudouridylate synthase C</fullName>
    </alternativeName>
    <alternativeName>
        <fullName>tRNA-uridine isomerase C</fullName>
    </alternativeName>
</protein>
<evidence type="ECO:0000250" key="1"/>
<evidence type="ECO:0000305" key="2"/>
<dbReference type="EC" id="5.4.99.26"/>
<dbReference type="EMBL" id="AL513382">
    <property type="protein sequence ID" value="CAD06078.1"/>
    <property type="molecule type" value="Genomic_DNA"/>
</dbReference>
<dbReference type="EMBL" id="AE014613">
    <property type="protein sequence ID" value="AAO70429.1"/>
    <property type="molecule type" value="Genomic_DNA"/>
</dbReference>
<dbReference type="RefSeq" id="NP_457360.1">
    <property type="nucleotide sequence ID" value="NC_003198.1"/>
</dbReference>
<dbReference type="RefSeq" id="WP_000890022.1">
    <property type="nucleotide sequence ID" value="NZ_WSUR01000005.1"/>
</dbReference>
<dbReference type="SMR" id="Q8Z439"/>
<dbReference type="STRING" id="220341.gene:17586988"/>
<dbReference type="KEGG" id="stt:t2873"/>
<dbReference type="KEGG" id="sty:STY3103"/>
<dbReference type="PATRIC" id="fig|220341.7.peg.3158"/>
<dbReference type="eggNOG" id="COG0564">
    <property type="taxonomic scope" value="Bacteria"/>
</dbReference>
<dbReference type="HOGENOM" id="CLU_016902_11_4_6"/>
<dbReference type="OMA" id="DRHETQF"/>
<dbReference type="OrthoDB" id="9785808at2"/>
<dbReference type="Proteomes" id="UP000000541">
    <property type="component" value="Chromosome"/>
</dbReference>
<dbReference type="Proteomes" id="UP000002670">
    <property type="component" value="Chromosome"/>
</dbReference>
<dbReference type="GO" id="GO:0003723">
    <property type="term" value="F:RNA binding"/>
    <property type="evidence" value="ECO:0007669"/>
    <property type="project" value="InterPro"/>
</dbReference>
<dbReference type="GO" id="GO:0160149">
    <property type="term" value="F:tRNA pseudouridine(65) synthase activity"/>
    <property type="evidence" value="ECO:0007669"/>
    <property type="project" value="UniProtKB-EC"/>
</dbReference>
<dbReference type="GO" id="GO:0000455">
    <property type="term" value="P:enzyme-directed rRNA pseudouridine synthesis"/>
    <property type="evidence" value="ECO:0007669"/>
    <property type="project" value="TreeGrafter"/>
</dbReference>
<dbReference type="GO" id="GO:0008033">
    <property type="term" value="P:tRNA processing"/>
    <property type="evidence" value="ECO:0007669"/>
    <property type="project" value="UniProtKB-KW"/>
</dbReference>
<dbReference type="CDD" id="cd02563">
    <property type="entry name" value="PseudoU_synth_TruC"/>
    <property type="match status" value="1"/>
</dbReference>
<dbReference type="FunFam" id="3.30.2350.10:FF:000008">
    <property type="entry name" value="tRNA pseudouridine synthase C"/>
    <property type="match status" value="1"/>
</dbReference>
<dbReference type="Gene3D" id="3.30.2350.10">
    <property type="entry name" value="Pseudouridine synthase"/>
    <property type="match status" value="1"/>
</dbReference>
<dbReference type="InterPro" id="IPR020103">
    <property type="entry name" value="PsdUridine_synth_cat_dom_sf"/>
</dbReference>
<dbReference type="InterPro" id="IPR006224">
    <property type="entry name" value="PsdUridine_synth_RluA-like_CS"/>
</dbReference>
<dbReference type="InterPro" id="IPR006145">
    <property type="entry name" value="PsdUridine_synth_RsuA/RluA"/>
</dbReference>
<dbReference type="InterPro" id="IPR050188">
    <property type="entry name" value="RluA_PseudoU_synthase"/>
</dbReference>
<dbReference type="NCBIfam" id="NF008321">
    <property type="entry name" value="PRK11112.1"/>
    <property type="match status" value="1"/>
</dbReference>
<dbReference type="PANTHER" id="PTHR21600">
    <property type="entry name" value="MITOCHONDRIAL RNA PSEUDOURIDINE SYNTHASE"/>
    <property type="match status" value="1"/>
</dbReference>
<dbReference type="PANTHER" id="PTHR21600:SF56">
    <property type="entry name" value="TRNA PSEUDOURIDINE SYNTHASE C"/>
    <property type="match status" value="1"/>
</dbReference>
<dbReference type="Pfam" id="PF00849">
    <property type="entry name" value="PseudoU_synth_2"/>
    <property type="match status" value="1"/>
</dbReference>
<dbReference type="SUPFAM" id="SSF55120">
    <property type="entry name" value="Pseudouridine synthase"/>
    <property type="match status" value="1"/>
</dbReference>
<dbReference type="PROSITE" id="PS01129">
    <property type="entry name" value="PSI_RLU"/>
    <property type="match status" value="1"/>
</dbReference>
<reference key="1">
    <citation type="journal article" date="2001" name="Nature">
        <title>Complete genome sequence of a multiple drug resistant Salmonella enterica serovar Typhi CT18.</title>
        <authorList>
            <person name="Parkhill J."/>
            <person name="Dougan G."/>
            <person name="James K.D."/>
            <person name="Thomson N.R."/>
            <person name="Pickard D."/>
            <person name="Wain J."/>
            <person name="Churcher C.M."/>
            <person name="Mungall K.L."/>
            <person name="Bentley S.D."/>
            <person name="Holden M.T.G."/>
            <person name="Sebaihia M."/>
            <person name="Baker S."/>
            <person name="Basham D."/>
            <person name="Brooks K."/>
            <person name="Chillingworth T."/>
            <person name="Connerton P."/>
            <person name="Cronin A."/>
            <person name="Davis P."/>
            <person name="Davies R.M."/>
            <person name="Dowd L."/>
            <person name="White N."/>
            <person name="Farrar J."/>
            <person name="Feltwell T."/>
            <person name="Hamlin N."/>
            <person name="Haque A."/>
            <person name="Hien T.T."/>
            <person name="Holroyd S."/>
            <person name="Jagels K."/>
            <person name="Krogh A."/>
            <person name="Larsen T.S."/>
            <person name="Leather S."/>
            <person name="Moule S."/>
            <person name="O'Gaora P."/>
            <person name="Parry C."/>
            <person name="Quail M.A."/>
            <person name="Rutherford K.M."/>
            <person name="Simmonds M."/>
            <person name="Skelton J."/>
            <person name="Stevens K."/>
            <person name="Whitehead S."/>
            <person name="Barrell B.G."/>
        </authorList>
    </citation>
    <scope>NUCLEOTIDE SEQUENCE [LARGE SCALE GENOMIC DNA]</scope>
    <source>
        <strain>CT18</strain>
    </source>
</reference>
<reference key="2">
    <citation type="journal article" date="2003" name="J. Bacteriol.">
        <title>Comparative genomics of Salmonella enterica serovar Typhi strains Ty2 and CT18.</title>
        <authorList>
            <person name="Deng W."/>
            <person name="Liou S.-R."/>
            <person name="Plunkett G. III"/>
            <person name="Mayhew G.F."/>
            <person name="Rose D.J."/>
            <person name="Burland V."/>
            <person name="Kodoyianni V."/>
            <person name="Schwartz D.C."/>
            <person name="Blattner F.R."/>
        </authorList>
    </citation>
    <scope>NUCLEOTIDE SEQUENCE [LARGE SCALE GENOMIC DNA]</scope>
    <source>
        <strain>ATCC 700931 / Ty2</strain>
    </source>
</reference>
<proteinExistence type="inferred from homology"/>
<comment type="function">
    <text evidence="1">Responsible for synthesis of pseudouridine from uracil-65 in transfer RNAs.</text>
</comment>
<comment type="catalytic activity">
    <reaction>
        <text>uridine(65) in tRNA = pseudouridine(65) in tRNA</text>
        <dbReference type="Rhea" id="RHEA:42536"/>
        <dbReference type="Rhea" id="RHEA-COMP:10103"/>
        <dbReference type="Rhea" id="RHEA-COMP:10104"/>
        <dbReference type="ChEBI" id="CHEBI:65314"/>
        <dbReference type="ChEBI" id="CHEBI:65315"/>
        <dbReference type="EC" id="5.4.99.26"/>
    </reaction>
</comment>
<comment type="similarity">
    <text evidence="2">Belongs to the pseudouridine synthase RluA family.</text>
</comment>
<gene>
    <name type="primary">truC</name>
    <name type="ordered locus">STY3103</name>
    <name type="ordered locus">t2873</name>
</gene>
<feature type="chain" id="PRO_0000162717" description="tRNA pseudouridine synthase C">
    <location>
        <begin position="1"/>
        <end position="260"/>
    </location>
</feature>
<feature type="active site" evidence="1">
    <location>
        <position position="54"/>
    </location>
</feature>
<accession>Q8Z439</accession>
<sequence length="260" mass="30055">MLEILYQDPWLVAVNKPAGWLVHRSWLDRDEKVVVMQTVRDQIGQHVFTAHRLDRPTSGVLLMGLSSEAGRRLAQQFEQHHIRKRYHAIVRGWLIDDAVLDYPLVEERDKIADKFAREDKAPQPAVTQYRGLATVEMAVPTGRYPTTRYGLVELEPKTGRKHQLRRHLAHLRHPIIGDSKHGDLRQNRSAAEHFACRRLMLHASRLELTHPFTGQPLIIQAGLDETWMQVLTQFGWRGLLPDNERVEFTAASRQDETHLT</sequence>
<keyword id="KW-0413">Isomerase</keyword>
<keyword id="KW-0819">tRNA processing</keyword>
<name>TRUC_SALTI</name>
<organism>
    <name type="scientific">Salmonella typhi</name>
    <dbReference type="NCBI Taxonomy" id="90370"/>
    <lineage>
        <taxon>Bacteria</taxon>
        <taxon>Pseudomonadati</taxon>
        <taxon>Pseudomonadota</taxon>
        <taxon>Gammaproteobacteria</taxon>
        <taxon>Enterobacterales</taxon>
        <taxon>Enterobacteriaceae</taxon>
        <taxon>Salmonella</taxon>
    </lineage>
</organism>